<protein>
    <recommendedName>
        <fullName evidence="1">Fluoride-specific ion channel FluC</fullName>
    </recommendedName>
</protein>
<name>FLUC_ECOSE</name>
<feature type="chain" id="PRO_1000125126" description="Fluoride-specific ion channel FluC">
    <location>
        <begin position="1"/>
        <end position="127"/>
    </location>
</feature>
<feature type="transmembrane region" description="Helical" evidence="1">
    <location>
        <begin position="4"/>
        <end position="24"/>
    </location>
</feature>
<feature type="transmembrane region" description="Helical" evidence="1">
    <location>
        <begin position="35"/>
        <end position="55"/>
    </location>
</feature>
<feature type="transmembrane region" description="Helical" evidence="1">
    <location>
        <begin position="71"/>
        <end position="91"/>
    </location>
</feature>
<feature type="transmembrane region" description="Helical" evidence="1">
    <location>
        <begin position="103"/>
        <end position="123"/>
    </location>
</feature>
<feature type="binding site" evidence="1">
    <location>
        <position position="75"/>
    </location>
    <ligand>
        <name>Na(+)</name>
        <dbReference type="ChEBI" id="CHEBI:29101"/>
        <note>structural</note>
    </ligand>
</feature>
<feature type="binding site" evidence="1">
    <location>
        <position position="78"/>
    </location>
    <ligand>
        <name>Na(+)</name>
        <dbReference type="ChEBI" id="CHEBI:29101"/>
        <note>structural</note>
    </ligand>
</feature>
<reference key="1">
    <citation type="journal article" date="2008" name="DNA Res.">
        <title>Complete genome sequence and comparative analysis of the wild-type commensal Escherichia coli strain SE11 isolated from a healthy adult.</title>
        <authorList>
            <person name="Oshima K."/>
            <person name="Toh H."/>
            <person name="Ogura Y."/>
            <person name="Sasamoto H."/>
            <person name="Morita H."/>
            <person name="Park S.-H."/>
            <person name="Ooka T."/>
            <person name="Iyoda S."/>
            <person name="Taylor T.D."/>
            <person name="Hayashi T."/>
            <person name="Itoh K."/>
            <person name="Hattori M."/>
        </authorList>
    </citation>
    <scope>NUCLEOTIDE SEQUENCE [LARGE SCALE GENOMIC DNA]</scope>
    <source>
        <strain>SE11</strain>
    </source>
</reference>
<accession>B6I134</accession>
<comment type="function">
    <text evidence="1">Fluoride-specific ion channel. Important for reducing fluoride concentration in the cell, thus reducing its toxicity.</text>
</comment>
<comment type="catalytic activity">
    <reaction evidence="1">
        <text>fluoride(in) = fluoride(out)</text>
        <dbReference type="Rhea" id="RHEA:76159"/>
        <dbReference type="ChEBI" id="CHEBI:17051"/>
    </reaction>
    <physiologicalReaction direction="left-to-right" evidence="1">
        <dbReference type="Rhea" id="RHEA:76160"/>
    </physiologicalReaction>
</comment>
<comment type="activity regulation">
    <text evidence="1">Na(+) is not transported, but it plays an essential structural role and its presence is essential for fluoride channel function.</text>
</comment>
<comment type="subcellular location">
    <subcellularLocation>
        <location evidence="1">Cell inner membrane</location>
        <topology evidence="1">Multi-pass membrane protein</topology>
    </subcellularLocation>
</comment>
<comment type="similarity">
    <text evidence="1">Belongs to the fluoride channel Fluc/FEX (TC 1.A.43) family.</text>
</comment>
<keyword id="KW-0997">Cell inner membrane</keyword>
<keyword id="KW-1003">Cell membrane</keyword>
<keyword id="KW-0407">Ion channel</keyword>
<keyword id="KW-0406">Ion transport</keyword>
<keyword id="KW-0472">Membrane</keyword>
<keyword id="KW-0479">Metal-binding</keyword>
<keyword id="KW-0915">Sodium</keyword>
<keyword id="KW-0812">Transmembrane</keyword>
<keyword id="KW-1133">Transmembrane helix</keyword>
<keyword id="KW-0813">Transport</keyword>
<evidence type="ECO:0000255" key="1">
    <source>
        <dbReference type="HAMAP-Rule" id="MF_00454"/>
    </source>
</evidence>
<dbReference type="EMBL" id="AP009240">
    <property type="protein sequence ID" value="BAG76216.1"/>
    <property type="molecule type" value="Genomic_DNA"/>
</dbReference>
<dbReference type="RefSeq" id="WP_000939738.1">
    <property type="nucleotide sequence ID" value="NC_011415.1"/>
</dbReference>
<dbReference type="SMR" id="B6I134"/>
<dbReference type="GeneID" id="93776858"/>
<dbReference type="KEGG" id="ecy:ECSE_0692"/>
<dbReference type="HOGENOM" id="CLU_114342_3_3_6"/>
<dbReference type="Proteomes" id="UP000008199">
    <property type="component" value="Chromosome"/>
</dbReference>
<dbReference type="GO" id="GO:0005886">
    <property type="term" value="C:plasma membrane"/>
    <property type="evidence" value="ECO:0007669"/>
    <property type="project" value="UniProtKB-SubCell"/>
</dbReference>
<dbReference type="GO" id="GO:0062054">
    <property type="term" value="F:fluoride channel activity"/>
    <property type="evidence" value="ECO:0007669"/>
    <property type="project" value="UniProtKB-UniRule"/>
</dbReference>
<dbReference type="GO" id="GO:0046872">
    <property type="term" value="F:metal ion binding"/>
    <property type="evidence" value="ECO:0007669"/>
    <property type="project" value="UniProtKB-KW"/>
</dbReference>
<dbReference type="GO" id="GO:0140114">
    <property type="term" value="P:cellular detoxification of fluoride"/>
    <property type="evidence" value="ECO:0007669"/>
    <property type="project" value="UniProtKB-UniRule"/>
</dbReference>
<dbReference type="HAMAP" id="MF_00454">
    <property type="entry name" value="FluC"/>
    <property type="match status" value="1"/>
</dbReference>
<dbReference type="InterPro" id="IPR003691">
    <property type="entry name" value="FluC"/>
</dbReference>
<dbReference type="NCBIfam" id="TIGR00494">
    <property type="entry name" value="crcB"/>
    <property type="match status" value="1"/>
</dbReference>
<dbReference type="NCBIfam" id="NF010792">
    <property type="entry name" value="PRK14196.1"/>
    <property type="match status" value="1"/>
</dbReference>
<dbReference type="PANTHER" id="PTHR28259">
    <property type="entry name" value="FLUORIDE EXPORT PROTEIN 1-RELATED"/>
    <property type="match status" value="1"/>
</dbReference>
<dbReference type="PANTHER" id="PTHR28259:SF1">
    <property type="entry name" value="FLUORIDE EXPORT PROTEIN 1-RELATED"/>
    <property type="match status" value="1"/>
</dbReference>
<dbReference type="Pfam" id="PF02537">
    <property type="entry name" value="CRCB"/>
    <property type="match status" value="1"/>
</dbReference>
<sequence length="127" mass="13765">MLQLLLAVFIGGGTGSVARWLLSMRFNPLHQAIPLGTLAANLIGAFIIGMGFAWFSRMTNIDPVWKVLITTGFCGGLTTFSTFSAEVVFLLQEGRFGWALLNVFVNLLGSFAMTALAFWLFSASTAH</sequence>
<organism>
    <name type="scientific">Escherichia coli (strain SE11)</name>
    <dbReference type="NCBI Taxonomy" id="409438"/>
    <lineage>
        <taxon>Bacteria</taxon>
        <taxon>Pseudomonadati</taxon>
        <taxon>Pseudomonadota</taxon>
        <taxon>Gammaproteobacteria</taxon>
        <taxon>Enterobacterales</taxon>
        <taxon>Enterobacteriaceae</taxon>
        <taxon>Escherichia</taxon>
    </lineage>
</organism>
<gene>
    <name evidence="1" type="primary">fluC</name>
    <name evidence="1" type="synonym">crcB</name>
    <name type="ordered locus">ECSE_0692</name>
</gene>
<proteinExistence type="inferred from homology"/>